<name>BGAL1_DICDI</name>
<gene>
    <name type="primary">glb1</name>
    <name type="ORF">DDB_G0290217</name>
</gene>
<feature type="signal peptide" evidence="2">
    <location>
        <begin position="1"/>
        <end position="18"/>
    </location>
</feature>
<feature type="chain" id="PRO_0000328062" description="Beta-galactosidase 1">
    <location>
        <begin position="19"/>
        <end position="671"/>
    </location>
</feature>
<feature type="active site" description="Proton donor" evidence="2">
    <location>
        <position position="200"/>
    </location>
</feature>
<feature type="active site" description="Nucleophile" evidence="2">
    <location>
        <position position="288"/>
    </location>
</feature>
<feature type="glycosylation site" description="N-linked (GlcNAc...) asparagine" evidence="2">
    <location>
        <position position="228"/>
    </location>
</feature>
<feature type="glycosylation site" description="N-linked (GlcNAc...) asparagine" evidence="2">
    <location>
        <position position="321"/>
    </location>
</feature>
<feature type="glycosylation site" description="N-linked (GlcNAc...) asparagine" evidence="2">
    <location>
        <position position="391"/>
    </location>
</feature>
<feature type="glycosylation site" description="N-linked (GlcNAc...) asparagine" evidence="2">
    <location>
        <position position="400"/>
    </location>
</feature>
<feature type="glycosylation site" description="N-linked (GlcNAc...) asparagine" evidence="2">
    <location>
        <position position="499"/>
    </location>
</feature>
<feature type="glycosylation site" description="N-linked (GlcNAc...) asparagine" evidence="2">
    <location>
        <position position="509"/>
    </location>
</feature>
<feature type="glycosylation site" description="N-linked (GlcNAc...) asparagine" evidence="2">
    <location>
        <position position="564"/>
    </location>
</feature>
<feature type="glycosylation site" description="N-linked (GlcNAc...) asparagine" evidence="2">
    <location>
        <position position="595"/>
    </location>
</feature>
<sequence>MKLIVLIFFLLFINLNYCLKIKEQPKVGGIDSEQPTNSFYIENGNFLMNNQGNGGSLNQYQIISGSFHYFRCLPELWVDRLTKMKACGLNTIQTYIPWNVHQPNGFNTELVATNDLIEFLRQAQQIGLNVILRPGPYSCAEWELGGFPYWILEQQPIALRSSDSVFISAVIAYWSRLLPLLEPLLFTNGGPIIMVQVENEYGSYGEDKSYLETLLTLLQKYLGQGDGNGSGVLFHSTDGPSAQMLFGSKLEGVYQTVDFGPMPIEQIQDNFKIQQTFASKPTPPMNSEYYTGWITNWGDASAARTDASVVAQGLDDILSLNASVNMYMFFGGSNAGFMNGANSNSPTTNFEITIQSYDYDSPLSESGDTTEKYFAIKNVIEKYIKPTTNSNSTLPPIPSNSTKVAYGTIQITQATSLFNNLANLVNSNQQQLQTGAPIPMEQLQQSTGFVLYETTMNIAQSSQLSITELHDRATIFINDEAIEDTQTIGQAVFLQRPFNSSIEITYPSNVTDDGNFNLRILLENQGRVNFGPYLNDRKGLLSGGVLSGQQYLGPWNNYPLPLTNKTLSNINNWEQIKDYTLSNTPTFYQATLSLNSTNDIGDTFLSFTGLGKGQLFVNGYNVGRYWNVGPQRTIYISSVLLHQGDNEIILFETLLTQPIFEIQFLNQPYFD</sequence>
<keyword id="KW-0325">Glycoprotein</keyword>
<keyword id="KW-0326">Glycosidase</keyword>
<keyword id="KW-0378">Hydrolase</keyword>
<keyword id="KW-0458">Lysosome</keyword>
<keyword id="KW-1185">Reference proteome</keyword>
<keyword id="KW-0732">Signal</keyword>
<protein>
    <recommendedName>
        <fullName>Beta-galactosidase 1</fullName>
        <ecNumber>3.2.1.23</ecNumber>
    </recommendedName>
    <alternativeName>
        <fullName>Acid beta-galactosidase 1</fullName>
        <shortName>Lactase 1</shortName>
    </alternativeName>
</protein>
<reference key="1">
    <citation type="journal article" date="2005" name="Nature">
        <title>The genome of the social amoeba Dictyostelium discoideum.</title>
        <authorList>
            <person name="Eichinger L."/>
            <person name="Pachebat J.A."/>
            <person name="Gloeckner G."/>
            <person name="Rajandream M.A."/>
            <person name="Sucgang R."/>
            <person name="Berriman M."/>
            <person name="Song J."/>
            <person name="Olsen R."/>
            <person name="Szafranski K."/>
            <person name="Xu Q."/>
            <person name="Tunggal B."/>
            <person name="Kummerfeld S."/>
            <person name="Madera M."/>
            <person name="Konfortov B.A."/>
            <person name="Rivero F."/>
            <person name="Bankier A.T."/>
            <person name="Lehmann R."/>
            <person name="Hamlin N."/>
            <person name="Davies R."/>
            <person name="Gaudet P."/>
            <person name="Fey P."/>
            <person name="Pilcher K."/>
            <person name="Chen G."/>
            <person name="Saunders D."/>
            <person name="Sodergren E.J."/>
            <person name="Davis P."/>
            <person name="Kerhornou A."/>
            <person name="Nie X."/>
            <person name="Hall N."/>
            <person name="Anjard C."/>
            <person name="Hemphill L."/>
            <person name="Bason N."/>
            <person name="Farbrother P."/>
            <person name="Desany B."/>
            <person name="Just E."/>
            <person name="Morio T."/>
            <person name="Rost R."/>
            <person name="Churcher C.M."/>
            <person name="Cooper J."/>
            <person name="Haydock S."/>
            <person name="van Driessche N."/>
            <person name="Cronin A."/>
            <person name="Goodhead I."/>
            <person name="Muzny D.M."/>
            <person name="Mourier T."/>
            <person name="Pain A."/>
            <person name="Lu M."/>
            <person name="Harper D."/>
            <person name="Lindsay R."/>
            <person name="Hauser H."/>
            <person name="James K.D."/>
            <person name="Quiles M."/>
            <person name="Madan Babu M."/>
            <person name="Saito T."/>
            <person name="Buchrieser C."/>
            <person name="Wardroper A."/>
            <person name="Felder M."/>
            <person name="Thangavelu M."/>
            <person name="Johnson D."/>
            <person name="Knights A."/>
            <person name="Loulseged H."/>
            <person name="Mungall K.L."/>
            <person name="Oliver K."/>
            <person name="Price C."/>
            <person name="Quail M.A."/>
            <person name="Urushihara H."/>
            <person name="Hernandez J."/>
            <person name="Rabbinowitsch E."/>
            <person name="Steffen D."/>
            <person name="Sanders M."/>
            <person name="Ma J."/>
            <person name="Kohara Y."/>
            <person name="Sharp S."/>
            <person name="Simmonds M.N."/>
            <person name="Spiegler S."/>
            <person name="Tivey A."/>
            <person name="Sugano S."/>
            <person name="White B."/>
            <person name="Walker D."/>
            <person name="Woodward J.R."/>
            <person name="Winckler T."/>
            <person name="Tanaka Y."/>
            <person name="Shaulsky G."/>
            <person name="Schleicher M."/>
            <person name="Weinstock G.M."/>
            <person name="Rosenthal A."/>
            <person name="Cox E.C."/>
            <person name="Chisholm R.L."/>
            <person name="Gibbs R.A."/>
            <person name="Loomis W.F."/>
            <person name="Platzer M."/>
            <person name="Kay R.R."/>
            <person name="Williams J.G."/>
            <person name="Dear P.H."/>
            <person name="Noegel A.A."/>
            <person name="Barrell B.G."/>
            <person name="Kuspa A."/>
        </authorList>
    </citation>
    <scope>NUCLEOTIDE SEQUENCE [LARGE SCALE GENOMIC DNA]</scope>
    <source>
        <strain>AX4</strain>
    </source>
</reference>
<accession>Q54GE1</accession>
<proteinExistence type="inferred from homology"/>
<comment type="function">
    <text evidence="1">Cleaves beta-linked terminal galactosyl residues from gangliosides, glycoproteins, and glycosaminoglycans.</text>
</comment>
<comment type="catalytic activity">
    <reaction>
        <text>Hydrolysis of terminal non-reducing beta-D-galactose residues in beta-D-galactosides.</text>
        <dbReference type="EC" id="3.2.1.23"/>
    </reaction>
</comment>
<comment type="subcellular location">
    <subcellularLocation>
        <location evidence="1">Lysosome</location>
    </subcellularLocation>
</comment>
<comment type="similarity">
    <text evidence="3">Belongs to the glycosyl hydrolase 35 family.</text>
</comment>
<evidence type="ECO:0000250" key="1"/>
<evidence type="ECO:0000255" key="2"/>
<evidence type="ECO:0000305" key="3"/>
<dbReference type="EC" id="3.2.1.23"/>
<dbReference type="EMBL" id="AAFI02000161">
    <property type="protein sequence ID" value="EAL62330.1"/>
    <property type="molecule type" value="Genomic_DNA"/>
</dbReference>
<dbReference type="RefSeq" id="XP_635837.1">
    <property type="nucleotide sequence ID" value="XM_630745.1"/>
</dbReference>
<dbReference type="SMR" id="Q54GE1"/>
<dbReference type="FunCoup" id="Q54GE1">
    <property type="interactions" value="96"/>
</dbReference>
<dbReference type="STRING" id="44689.Q54GE1"/>
<dbReference type="GlyCosmos" id="Q54GE1">
    <property type="glycosylation" value="8 sites, No reported glycans"/>
</dbReference>
<dbReference type="GlyGen" id="Q54GE1">
    <property type="glycosylation" value="9 sites"/>
</dbReference>
<dbReference type="PaxDb" id="44689-DDB0266380"/>
<dbReference type="EnsemblProtists" id="EAL62330">
    <property type="protein sequence ID" value="EAL62330"/>
    <property type="gene ID" value="DDB_G0290217"/>
</dbReference>
<dbReference type="GeneID" id="8627545"/>
<dbReference type="KEGG" id="ddi:DDB_G0290217"/>
<dbReference type="dictyBase" id="DDB_G0290217">
    <property type="gene designation" value="glb1"/>
</dbReference>
<dbReference type="VEuPathDB" id="AmoebaDB:DDB_G0290217"/>
<dbReference type="eggNOG" id="KOG0496">
    <property type="taxonomic scope" value="Eukaryota"/>
</dbReference>
<dbReference type="HOGENOM" id="CLU_007853_7_2_1"/>
<dbReference type="InParanoid" id="Q54GE1"/>
<dbReference type="OMA" id="FWNIHEQ"/>
<dbReference type="PhylomeDB" id="Q54GE1"/>
<dbReference type="Reactome" id="R-DDI-2022857">
    <property type="pathway name" value="Keratan sulfate degradation"/>
</dbReference>
<dbReference type="Reactome" id="R-DDI-2024096">
    <property type="pathway name" value="HS-GAG degradation"/>
</dbReference>
<dbReference type="Reactome" id="R-DDI-6798695">
    <property type="pathway name" value="Neutrophil degranulation"/>
</dbReference>
<dbReference type="Reactome" id="R-DDI-9840310">
    <property type="pathway name" value="Glycosphingolipid catabolism"/>
</dbReference>
<dbReference type="PRO" id="PR:Q54GE1"/>
<dbReference type="Proteomes" id="UP000002195">
    <property type="component" value="Chromosome 5"/>
</dbReference>
<dbReference type="GO" id="GO:0005764">
    <property type="term" value="C:lysosome"/>
    <property type="evidence" value="ECO:0007669"/>
    <property type="project" value="UniProtKB-SubCell"/>
</dbReference>
<dbReference type="GO" id="GO:0005773">
    <property type="term" value="C:vacuole"/>
    <property type="evidence" value="ECO:0000318"/>
    <property type="project" value="GO_Central"/>
</dbReference>
<dbReference type="GO" id="GO:0004565">
    <property type="term" value="F:beta-galactosidase activity"/>
    <property type="evidence" value="ECO:0000318"/>
    <property type="project" value="GO_Central"/>
</dbReference>
<dbReference type="GO" id="GO:0019388">
    <property type="term" value="P:galactose catabolic process"/>
    <property type="evidence" value="ECO:0000318"/>
    <property type="project" value="GO_Central"/>
</dbReference>
<dbReference type="FunFam" id="2.60.120.260:FF:000021">
    <property type="entry name" value="Beta-galactosidase"/>
    <property type="match status" value="1"/>
</dbReference>
<dbReference type="FunFam" id="3.20.20.80:FF:000115">
    <property type="entry name" value="Beta-galactosidase"/>
    <property type="match status" value="1"/>
</dbReference>
<dbReference type="Gene3D" id="2.60.120.260">
    <property type="entry name" value="Galactose-binding domain-like"/>
    <property type="match status" value="2"/>
</dbReference>
<dbReference type="Gene3D" id="3.20.20.80">
    <property type="entry name" value="Glycosidases"/>
    <property type="match status" value="1"/>
</dbReference>
<dbReference type="InterPro" id="IPR026283">
    <property type="entry name" value="B-gal_1-like"/>
</dbReference>
<dbReference type="InterPro" id="IPR048912">
    <property type="entry name" value="BetaGal1-like_ABD1"/>
</dbReference>
<dbReference type="InterPro" id="IPR048913">
    <property type="entry name" value="BetaGal_gal-bd"/>
</dbReference>
<dbReference type="InterPro" id="IPR008979">
    <property type="entry name" value="Galactose-bd-like_sf"/>
</dbReference>
<dbReference type="InterPro" id="IPR031330">
    <property type="entry name" value="Gly_Hdrlase_35_cat"/>
</dbReference>
<dbReference type="InterPro" id="IPR019801">
    <property type="entry name" value="Glyco_hydro_35_CS"/>
</dbReference>
<dbReference type="InterPro" id="IPR001944">
    <property type="entry name" value="Glycoside_Hdrlase_35"/>
</dbReference>
<dbReference type="InterPro" id="IPR017853">
    <property type="entry name" value="Glycoside_hydrolase_SF"/>
</dbReference>
<dbReference type="PANTHER" id="PTHR23421">
    <property type="entry name" value="BETA-GALACTOSIDASE RELATED"/>
    <property type="match status" value="1"/>
</dbReference>
<dbReference type="Pfam" id="PF21317">
    <property type="entry name" value="BetaGal_ABD_1"/>
    <property type="match status" value="1"/>
</dbReference>
<dbReference type="Pfam" id="PF21467">
    <property type="entry name" value="BetaGal_gal-bd"/>
    <property type="match status" value="1"/>
</dbReference>
<dbReference type="Pfam" id="PF01301">
    <property type="entry name" value="Glyco_hydro_35"/>
    <property type="match status" value="1"/>
</dbReference>
<dbReference type="PIRSF" id="PIRSF006336">
    <property type="entry name" value="B-gal"/>
    <property type="match status" value="1"/>
</dbReference>
<dbReference type="PRINTS" id="PR00742">
    <property type="entry name" value="GLHYDRLASE35"/>
</dbReference>
<dbReference type="SUPFAM" id="SSF51445">
    <property type="entry name" value="(Trans)glycosidases"/>
    <property type="match status" value="1"/>
</dbReference>
<dbReference type="SUPFAM" id="SSF49785">
    <property type="entry name" value="Galactose-binding domain-like"/>
    <property type="match status" value="1"/>
</dbReference>
<dbReference type="PROSITE" id="PS01182">
    <property type="entry name" value="GLYCOSYL_HYDROL_F35"/>
    <property type="match status" value="1"/>
</dbReference>
<organism>
    <name type="scientific">Dictyostelium discoideum</name>
    <name type="common">Social amoeba</name>
    <dbReference type="NCBI Taxonomy" id="44689"/>
    <lineage>
        <taxon>Eukaryota</taxon>
        <taxon>Amoebozoa</taxon>
        <taxon>Evosea</taxon>
        <taxon>Eumycetozoa</taxon>
        <taxon>Dictyostelia</taxon>
        <taxon>Dictyosteliales</taxon>
        <taxon>Dictyosteliaceae</taxon>
        <taxon>Dictyostelium</taxon>
    </lineage>
</organism>